<comment type="function">
    <text evidence="1">Catalyzes the strictly specific dephosphorylation of 2'-deoxyribonucleoside 5'-monophosphates.</text>
</comment>
<comment type="catalytic activity">
    <reaction evidence="1">
        <text>a 2'-deoxyribonucleoside 5'-phosphate + H2O = a 2'-deoxyribonucleoside + phosphate</text>
        <dbReference type="Rhea" id="RHEA:36167"/>
        <dbReference type="ChEBI" id="CHEBI:15377"/>
        <dbReference type="ChEBI" id="CHEBI:18274"/>
        <dbReference type="ChEBI" id="CHEBI:43474"/>
        <dbReference type="ChEBI" id="CHEBI:65317"/>
        <dbReference type="EC" id="3.1.3.89"/>
    </reaction>
</comment>
<comment type="cofactor">
    <cofactor evidence="1">
        <name>a divalent metal cation</name>
        <dbReference type="ChEBI" id="CHEBI:60240"/>
    </cofactor>
</comment>
<comment type="subunit">
    <text evidence="1">Homodimer.</text>
</comment>
<comment type="subcellular location">
    <subcellularLocation>
        <location evidence="1">Cytoplasm</location>
    </subcellularLocation>
</comment>
<comment type="similarity">
    <text evidence="1">Belongs to the 5DNU family.</text>
</comment>
<reference key="1">
    <citation type="journal article" date="2009" name="J. Bacteriol.">
        <title>Complete genome sequence and comparative genome analysis of enteropathogenic Escherichia coli O127:H6 strain E2348/69.</title>
        <authorList>
            <person name="Iguchi A."/>
            <person name="Thomson N.R."/>
            <person name="Ogura Y."/>
            <person name="Saunders D."/>
            <person name="Ooka T."/>
            <person name="Henderson I.R."/>
            <person name="Harris D."/>
            <person name="Asadulghani M."/>
            <person name="Kurokawa K."/>
            <person name="Dean P."/>
            <person name="Kenny B."/>
            <person name="Quail M.A."/>
            <person name="Thurston S."/>
            <person name="Dougan G."/>
            <person name="Hayashi T."/>
            <person name="Parkhill J."/>
            <person name="Frankel G."/>
        </authorList>
    </citation>
    <scope>NUCLEOTIDE SEQUENCE [LARGE SCALE GENOMIC DNA]</scope>
    <source>
        <strain>E2348/69 / EPEC</strain>
    </source>
</reference>
<keyword id="KW-0963">Cytoplasm</keyword>
<keyword id="KW-0378">Hydrolase</keyword>
<keyword id="KW-0479">Metal-binding</keyword>
<keyword id="KW-0547">Nucleotide-binding</keyword>
<keyword id="KW-1185">Reference proteome</keyword>
<name>5DNU_ECO27</name>
<feature type="chain" id="PRO_1000149894" description="5'-deoxynucleotidase YfbR">
    <location>
        <begin position="1"/>
        <end position="199"/>
    </location>
</feature>
<feature type="domain" description="HD" evidence="2">
    <location>
        <begin position="30"/>
        <end position="142"/>
    </location>
</feature>
<feature type="binding site" evidence="1">
    <location>
        <begin position="18"/>
        <end position="19"/>
    </location>
    <ligand>
        <name>substrate</name>
    </ligand>
</feature>
<feature type="binding site" evidence="1">
    <location>
        <position position="33"/>
    </location>
    <ligand>
        <name>a divalent metal cation</name>
        <dbReference type="ChEBI" id="CHEBI:60240"/>
    </ligand>
</feature>
<feature type="binding site" evidence="1">
    <location>
        <position position="33"/>
    </location>
    <ligand>
        <name>substrate</name>
    </ligand>
</feature>
<feature type="binding site" evidence="1">
    <location>
        <position position="68"/>
    </location>
    <ligand>
        <name>a divalent metal cation</name>
        <dbReference type="ChEBI" id="CHEBI:60240"/>
    </ligand>
</feature>
<feature type="binding site" evidence="1">
    <location>
        <position position="69"/>
    </location>
    <ligand>
        <name>a divalent metal cation</name>
        <dbReference type="ChEBI" id="CHEBI:60240"/>
    </ligand>
</feature>
<feature type="binding site" evidence="1">
    <location>
        <position position="69"/>
    </location>
    <ligand>
        <name>substrate</name>
    </ligand>
</feature>
<feature type="binding site" evidence="1">
    <location>
        <begin position="77"/>
        <end position="80"/>
    </location>
    <ligand>
        <name>substrate</name>
    </ligand>
</feature>
<feature type="binding site" evidence="1">
    <location>
        <position position="137"/>
    </location>
    <ligand>
        <name>a divalent metal cation</name>
        <dbReference type="ChEBI" id="CHEBI:60240"/>
    </ligand>
</feature>
<feature type="binding site" evidence="1">
    <location>
        <position position="137"/>
    </location>
    <ligand>
        <name>substrate</name>
    </ligand>
</feature>
<feature type="site" description="Appears to be important in orienting the phosphate for catalysis" evidence="1">
    <location>
        <position position="18"/>
    </location>
</feature>
<protein>
    <recommendedName>
        <fullName evidence="1">5'-deoxynucleotidase YfbR</fullName>
        <ecNumber evidence="1">3.1.3.89</ecNumber>
    </recommendedName>
    <alternativeName>
        <fullName evidence="1">5'-deoxyribonucleotidase</fullName>
    </alternativeName>
    <alternativeName>
        <fullName evidence="1">Nucleoside 5'-monophosphate phosphohydrolase</fullName>
    </alternativeName>
</protein>
<organism>
    <name type="scientific">Escherichia coli O127:H6 (strain E2348/69 / EPEC)</name>
    <dbReference type="NCBI Taxonomy" id="574521"/>
    <lineage>
        <taxon>Bacteria</taxon>
        <taxon>Pseudomonadati</taxon>
        <taxon>Pseudomonadota</taxon>
        <taxon>Gammaproteobacteria</taxon>
        <taxon>Enterobacterales</taxon>
        <taxon>Enterobacteriaceae</taxon>
        <taxon>Escherichia</taxon>
    </lineage>
</organism>
<gene>
    <name evidence="1" type="primary">yfbR</name>
    <name type="ordered locus">E2348C_2431</name>
</gene>
<accession>B7UFU9</accession>
<evidence type="ECO:0000255" key="1">
    <source>
        <dbReference type="HAMAP-Rule" id="MF_01100"/>
    </source>
</evidence>
<evidence type="ECO:0000255" key="2">
    <source>
        <dbReference type="PROSITE-ProRule" id="PRU01175"/>
    </source>
</evidence>
<dbReference type="EC" id="3.1.3.89" evidence="1"/>
<dbReference type="EMBL" id="FM180568">
    <property type="protein sequence ID" value="CAS09979.1"/>
    <property type="molecule type" value="Genomic_DNA"/>
</dbReference>
<dbReference type="RefSeq" id="WP_000813852.1">
    <property type="nucleotide sequence ID" value="NC_011601.1"/>
</dbReference>
<dbReference type="SMR" id="B7UFU9"/>
<dbReference type="KEGG" id="ecg:E2348C_2431"/>
<dbReference type="HOGENOM" id="CLU_084784_0_0_6"/>
<dbReference type="Proteomes" id="UP000008205">
    <property type="component" value="Chromosome"/>
</dbReference>
<dbReference type="GO" id="GO:0005737">
    <property type="term" value="C:cytoplasm"/>
    <property type="evidence" value="ECO:0007669"/>
    <property type="project" value="UniProtKB-SubCell"/>
</dbReference>
<dbReference type="GO" id="GO:0002953">
    <property type="term" value="F:5'-deoxynucleotidase activity"/>
    <property type="evidence" value="ECO:0007669"/>
    <property type="project" value="UniProtKB-EC"/>
</dbReference>
<dbReference type="GO" id="GO:0046872">
    <property type="term" value="F:metal ion binding"/>
    <property type="evidence" value="ECO:0007669"/>
    <property type="project" value="UniProtKB-KW"/>
</dbReference>
<dbReference type="GO" id="GO:0000166">
    <property type="term" value="F:nucleotide binding"/>
    <property type="evidence" value="ECO:0007669"/>
    <property type="project" value="UniProtKB-KW"/>
</dbReference>
<dbReference type="CDD" id="cd00077">
    <property type="entry name" value="HDc"/>
    <property type="match status" value="1"/>
</dbReference>
<dbReference type="FunFam" id="1.10.3210.10:FF:000002">
    <property type="entry name" value="Nucleotidase YfbR"/>
    <property type="match status" value="1"/>
</dbReference>
<dbReference type="Gene3D" id="1.10.3210.10">
    <property type="entry name" value="Hypothetical protein af1432"/>
    <property type="match status" value="1"/>
</dbReference>
<dbReference type="HAMAP" id="MF_01100">
    <property type="entry name" value="5DNU"/>
    <property type="match status" value="1"/>
</dbReference>
<dbReference type="InterPro" id="IPR003607">
    <property type="entry name" value="HD/PDEase_dom"/>
</dbReference>
<dbReference type="InterPro" id="IPR006674">
    <property type="entry name" value="HD_domain"/>
</dbReference>
<dbReference type="InterPro" id="IPR022971">
    <property type="entry name" value="YfbR"/>
</dbReference>
<dbReference type="InterPro" id="IPR039356">
    <property type="entry name" value="YfbR/HDDC2"/>
</dbReference>
<dbReference type="NCBIfam" id="NF003009">
    <property type="entry name" value="PRK03826.1"/>
    <property type="match status" value="1"/>
</dbReference>
<dbReference type="PANTHER" id="PTHR11845">
    <property type="entry name" value="5'-DEOXYNUCLEOTIDASE HDDC2"/>
    <property type="match status" value="1"/>
</dbReference>
<dbReference type="PANTHER" id="PTHR11845:SF13">
    <property type="entry name" value="5'-DEOXYNUCLEOTIDASE HDDC2"/>
    <property type="match status" value="1"/>
</dbReference>
<dbReference type="Pfam" id="PF12917">
    <property type="entry name" value="YfbR-like"/>
    <property type="match status" value="1"/>
</dbReference>
<dbReference type="SMART" id="SM00471">
    <property type="entry name" value="HDc"/>
    <property type="match status" value="1"/>
</dbReference>
<dbReference type="SUPFAM" id="SSF109604">
    <property type="entry name" value="HD-domain/PDEase-like"/>
    <property type="match status" value="1"/>
</dbReference>
<dbReference type="PROSITE" id="PS51831">
    <property type="entry name" value="HD"/>
    <property type="match status" value="1"/>
</dbReference>
<proteinExistence type="inferred from homology"/>
<sequence length="199" mass="22666">MKQSHFFAHLSRLKLINRWPLMRNVRTENVSEHSLQVAMVAHALAAIKNRKFGGNVNAERIALLAMYHDASEVLTGDLPTPVKYFNSQIAKEYKAIEKIAQQKLVDMVPEELQDIFAPLIDEHAYSDEEKSLVKQADALCAYLKCLEELAAGNNEFLLAKTRLEATLEARRSQEMDYFMEVFVPSFHLSLDEISQDSPL</sequence>